<accession>Q9HHY8</accession>
<protein>
    <recommendedName>
        <fullName>ORC1-type DNA replication protein 2</fullName>
    </recommendedName>
</protein>
<name>CDC62_HALSA</name>
<sequence>MTPDSSPSSVDDPLFESGHRIFANKDLLKIGHVPEADRIVGRDEEISKLAKRLNGAVHGYSPENVMIYGKTGTGKSLVSKHVCQRAQNAAQDGVEIGTAYIDCAEDNTETQAISSLAAKLNNESSTGISVPHTGLSTSKYYKLLWKTLDAQFDSVIIILDEIDLMNDDSVLMKLSRAEEAGKIDCSVGVIAISNKIQYVDNVNERVKSSFQHKELFFKPYDANQLREIMFNREDFSSSTTTYSISWPGWTASSCSRARFKAATF</sequence>
<comment type="function">
    <text evidence="1">Involved in regulation of DNA replication.</text>
</comment>
<comment type="disruption phenotype">
    <text evidence="2">Essential for normal growth.</text>
</comment>
<comment type="similarity">
    <text evidence="3">Belongs to the CDC6/cdc18 family.</text>
</comment>
<keyword id="KW-0067">ATP-binding</keyword>
<keyword id="KW-0235">DNA replication</keyword>
<keyword id="KW-0547">Nucleotide-binding</keyword>
<keyword id="KW-0614">Plasmid</keyword>
<keyword id="KW-1185">Reference proteome</keyword>
<gene>
    <name type="primary">orc2</name>
    <name type="ordered locus">VNG_6164G</name>
</gene>
<feature type="chain" id="PRO_0000428864" description="ORC1-type DNA replication protein 2">
    <location>
        <begin position="1"/>
        <end position="264"/>
    </location>
</feature>
<feature type="binding site" evidence="1">
    <location>
        <begin position="73"/>
        <end position="77"/>
    </location>
    <ligand>
        <name>ATP</name>
        <dbReference type="ChEBI" id="CHEBI:30616"/>
    </ligand>
</feature>
<feature type="binding site" evidence="1">
    <location>
        <position position="220"/>
    </location>
    <ligand>
        <name>ATP</name>
        <dbReference type="ChEBI" id="CHEBI:30616"/>
    </ligand>
</feature>
<feature type="binding site" evidence="1">
    <location>
        <position position="232"/>
    </location>
    <ligand>
        <name>ATP</name>
        <dbReference type="ChEBI" id="CHEBI:30616"/>
    </ligand>
</feature>
<evidence type="ECO:0000250" key="1"/>
<evidence type="ECO:0000269" key="2">
    <source>
    </source>
</evidence>
<evidence type="ECO:0000305" key="3"/>
<organism>
    <name type="scientific">Halobacterium salinarum (strain ATCC 700922 / JCM 11081 / NRC-1)</name>
    <name type="common">Halobacterium halobium</name>
    <dbReference type="NCBI Taxonomy" id="64091"/>
    <lineage>
        <taxon>Archaea</taxon>
        <taxon>Methanobacteriati</taxon>
        <taxon>Methanobacteriota</taxon>
        <taxon>Stenosarchaea group</taxon>
        <taxon>Halobacteria</taxon>
        <taxon>Halobacteriales</taxon>
        <taxon>Halobacteriaceae</taxon>
        <taxon>Halobacterium</taxon>
        <taxon>Halobacterium salinarum NRC-34001</taxon>
    </lineage>
</organism>
<proteinExistence type="inferred from homology"/>
<dbReference type="EMBL" id="AE004438">
    <property type="protein sequence ID" value="AAG20835.1"/>
    <property type="molecule type" value="Genomic_DNA"/>
</dbReference>
<dbReference type="SMR" id="Q9HHY8"/>
<dbReference type="KEGG" id="hal:VNG_6164G"/>
<dbReference type="PATRIC" id="fig|64091.14.peg.2193"/>
<dbReference type="HOGENOM" id="CLU_025112_2_2_2"/>
<dbReference type="InParanoid" id="Q9HHY8"/>
<dbReference type="Proteomes" id="UP000000554">
    <property type="component" value="Plasmid pNRC200"/>
</dbReference>
<dbReference type="GO" id="GO:0005524">
    <property type="term" value="F:ATP binding"/>
    <property type="evidence" value="ECO:0007669"/>
    <property type="project" value="UniProtKB-KW"/>
</dbReference>
<dbReference type="GO" id="GO:0016887">
    <property type="term" value="F:ATP hydrolysis activity"/>
    <property type="evidence" value="ECO:0007669"/>
    <property type="project" value="InterPro"/>
</dbReference>
<dbReference type="GO" id="GO:0006260">
    <property type="term" value="P:DNA replication"/>
    <property type="evidence" value="ECO:0007669"/>
    <property type="project" value="UniProtKB-KW"/>
</dbReference>
<dbReference type="CDD" id="cd00009">
    <property type="entry name" value="AAA"/>
    <property type="match status" value="1"/>
</dbReference>
<dbReference type="FunFam" id="3.40.50.300:FF:000930">
    <property type="entry name" value="ORC1-type DNA replication protein"/>
    <property type="match status" value="1"/>
</dbReference>
<dbReference type="Gene3D" id="3.40.50.300">
    <property type="entry name" value="P-loop containing nucleotide triphosphate hydrolases"/>
    <property type="match status" value="1"/>
</dbReference>
<dbReference type="InterPro" id="IPR003593">
    <property type="entry name" value="AAA+_ATPase"/>
</dbReference>
<dbReference type="InterPro" id="IPR049945">
    <property type="entry name" value="AAA_22"/>
</dbReference>
<dbReference type="InterPro" id="IPR050311">
    <property type="entry name" value="ORC1/CDC6"/>
</dbReference>
<dbReference type="InterPro" id="IPR014277">
    <property type="entry name" value="Orc1/Cdc6_arc"/>
</dbReference>
<dbReference type="InterPro" id="IPR027417">
    <property type="entry name" value="P-loop_NTPase"/>
</dbReference>
<dbReference type="NCBIfam" id="TIGR02928">
    <property type="entry name" value="orc1/cdc6 family replication initiation protein"/>
    <property type="match status" value="1"/>
</dbReference>
<dbReference type="PANTHER" id="PTHR10763">
    <property type="entry name" value="CELL DIVISION CONTROL PROTEIN 6-RELATED"/>
    <property type="match status" value="1"/>
</dbReference>
<dbReference type="PANTHER" id="PTHR10763:SF22">
    <property type="entry name" value="ORC1-TYPE DNA REPLICATION PROTEIN"/>
    <property type="match status" value="1"/>
</dbReference>
<dbReference type="Pfam" id="PF13401">
    <property type="entry name" value="AAA_22"/>
    <property type="match status" value="1"/>
</dbReference>
<dbReference type="SMART" id="SM00382">
    <property type="entry name" value="AAA"/>
    <property type="match status" value="1"/>
</dbReference>
<dbReference type="SUPFAM" id="SSF52540">
    <property type="entry name" value="P-loop containing nucleoside triphosphate hydrolases"/>
    <property type="match status" value="1"/>
</dbReference>
<geneLocation type="plasmid">
    <name>pNRC200</name>
</geneLocation>
<reference key="1">
    <citation type="journal article" date="2000" name="Proc. Natl. Acad. Sci. U.S.A.">
        <title>Genome sequence of Halobacterium species NRC-1.</title>
        <authorList>
            <person name="Ng W.V."/>
            <person name="Kennedy S.P."/>
            <person name="Mahairas G.G."/>
            <person name="Berquist B."/>
            <person name="Pan M."/>
            <person name="Shukla H.D."/>
            <person name="Lasky S.R."/>
            <person name="Baliga N.S."/>
            <person name="Thorsson V."/>
            <person name="Sbrogna J."/>
            <person name="Swartzell S."/>
            <person name="Weir D."/>
            <person name="Hall J."/>
            <person name="Dahl T.A."/>
            <person name="Welti R."/>
            <person name="Goo Y.A."/>
            <person name="Leithauser B."/>
            <person name="Keller K."/>
            <person name="Cruz R."/>
            <person name="Danson M.J."/>
            <person name="Hough D.W."/>
            <person name="Maddocks D.G."/>
            <person name="Jablonski P.E."/>
            <person name="Krebs M.P."/>
            <person name="Angevine C.M."/>
            <person name="Dale H."/>
            <person name="Isenbarger T.A."/>
            <person name="Peck R.F."/>
            <person name="Pohlschroder M."/>
            <person name="Spudich J.L."/>
            <person name="Jung K.-H."/>
            <person name="Alam M."/>
            <person name="Freitas T."/>
            <person name="Hou S."/>
            <person name="Daniels C.J."/>
            <person name="Dennis P.P."/>
            <person name="Omer A.D."/>
            <person name="Ebhardt H."/>
            <person name="Lowe T.M."/>
            <person name="Liang P."/>
            <person name="Riley M."/>
            <person name="Hood L."/>
            <person name="DasSarma S."/>
        </authorList>
    </citation>
    <scope>NUCLEOTIDE SEQUENCE [LARGE SCALE GENOMIC DNA]</scope>
    <source>
        <strain>ATCC 700922 / JCM 11081 / NRC-1</strain>
        <plasmid>pNRC200</plasmid>
    </source>
</reference>
<reference key="2">
    <citation type="journal article" date="2007" name="BMC Genet.">
        <title>Essential and non-essential DNA replication genes in the model halophilic Archaeon, Halobacterium sp. NRC-1.</title>
        <authorList>
            <person name="Berquist B.R."/>
            <person name="DasSarma P."/>
            <person name="DasSarma S."/>
        </authorList>
    </citation>
    <scope>DISRUPTION PHENOTYPE</scope>
    <source>
        <strain>ATCC 700922 / JCM 11081 / NRC-1</strain>
    </source>
</reference>